<organism>
    <name type="scientific">Listeria monocytogenes serovar 1/2a (strain ATCC BAA-679 / EGD-e)</name>
    <dbReference type="NCBI Taxonomy" id="169963"/>
    <lineage>
        <taxon>Bacteria</taxon>
        <taxon>Bacillati</taxon>
        <taxon>Bacillota</taxon>
        <taxon>Bacilli</taxon>
        <taxon>Bacillales</taxon>
        <taxon>Listeriaceae</taxon>
        <taxon>Listeria</taxon>
    </lineage>
</organism>
<proteinExistence type="inferred from homology"/>
<comment type="function">
    <text evidence="1">May bind long-chain fatty acids, such as palmitate, and may play a role in lipid transport or fatty acid metabolism.</text>
</comment>
<evidence type="ECO:0000250" key="1"/>
<evidence type="ECO:0000250" key="2">
    <source>
        <dbReference type="UniProtKB" id="Q9X1H9"/>
    </source>
</evidence>
<evidence type="ECO:0000255" key="3">
    <source>
        <dbReference type="PROSITE-ProRule" id="PRU00815"/>
    </source>
</evidence>
<gene>
    <name type="ordered locus">lmo2514</name>
</gene>
<keyword id="KW-0446">Lipid-binding</keyword>
<keyword id="KW-1185">Reference proteome</keyword>
<sequence length="283" mass="31258">MNEKIAVVTDSTTYLPDEVKEQLRINVVPLSVIIDGKSYREGEELSATDFYRKVKEAENFPTSSQPAPGEFIHLFENLKEQGFDTVISIHLSSGISGTFQNAASAGELIEGLNVVAYDSELSCMAQGMFAVKAAEMALANEPLDQIIQKLDKIKQAQDAYFMVDDLNNLQRGGRLNGAQALVGSLLQIKPILHFNDKQIVLFEKVRTQKKALKRIEDILQKAVQNKTAEKAYVIHGNDLAKGEAWLAQLEAKFPEVTFELSYFGPVIGTHLGEGALGLTWSIK</sequence>
<feature type="chain" id="PRO_0000209771" description="DegV domain-containing protein lmo2514">
    <location>
        <begin position="1"/>
        <end position="283"/>
    </location>
</feature>
<feature type="domain" description="DegV" evidence="3">
    <location>
        <begin position="5"/>
        <end position="282"/>
    </location>
</feature>
<feature type="binding site" evidence="2">
    <location>
        <position position="63"/>
    </location>
    <ligand>
        <name>hexadecanoate</name>
        <dbReference type="ChEBI" id="CHEBI:7896"/>
    </ligand>
</feature>
<feature type="binding site" evidence="2">
    <location>
        <position position="96"/>
    </location>
    <ligand>
        <name>hexadecanoate</name>
        <dbReference type="ChEBI" id="CHEBI:7896"/>
    </ligand>
</feature>
<accession>Q8Y4D5</accession>
<protein>
    <recommendedName>
        <fullName>DegV domain-containing protein lmo2514</fullName>
    </recommendedName>
</protein>
<name>Y2514_LISMO</name>
<reference key="1">
    <citation type="journal article" date="2001" name="Science">
        <title>Comparative genomics of Listeria species.</title>
        <authorList>
            <person name="Glaser P."/>
            <person name="Frangeul L."/>
            <person name="Buchrieser C."/>
            <person name="Rusniok C."/>
            <person name="Amend A."/>
            <person name="Baquero F."/>
            <person name="Berche P."/>
            <person name="Bloecker H."/>
            <person name="Brandt P."/>
            <person name="Chakraborty T."/>
            <person name="Charbit A."/>
            <person name="Chetouani F."/>
            <person name="Couve E."/>
            <person name="de Daruvar A."/>
            <person name="Dehoux P."/>
            <person name="Domann E."/>
            <person name="Dominguez-Bernal G."/>
            <person name="Duchaud E."/>
            <person name="Durant L."/>
            <person name="Dussurget O."/>
            <person name="Entian K.-D."/>
            <person name="Fsihi H."/>
            <person name="Garcia-del Portillo F."/>
            <person name="Garrido P."/>
            <person name="Gautier L."/>
            <person name="Goebel W."/>
            <person name="Gomez-Lopez N."/>
            <person name="Hain T."/>
            <person name="Hauf J."/>
            <person name="Jackson D."/>
            <person name="Jones L.-M."/>
            <person name="Kaerst U."/>
            <person name="Kreft J."/>
            <person name="Kuhn M."/>
            <person name="Kunst F."/>
            <person name="Kurapkat G."/>
            <person name="Madueno E."/>
            <person name="Maitournam A."/>
            <person name="Mata Vicente J."/>
            <person name="Ng E."/>
            <person name="Nedjari H."/>
            <person name="Nordsiek G."/>
            <person name="Novella S."/>
            <person name="de Pablos B."/>
            <person name="Perez-Diaz J.-C."/>
            <person name="Purcell R."/>
            <person name="Remmel B."/>
            <person name="Rose M."/>
            <person name="Schlueter T."/>
            <person name="Simoes N."/>
            <person name="Tierrez A."/>
            <person name="Vazquez-Boland J.-A."/>
            <person name="Voss H."/>
            <person name="Wehland J."/>
            <person name="Cossart P."/>
        </authorList>
    </citation>
    <scope>NUCLEOTIDE SEQUENCE [LARGE SCALE GENOMIC DNA]</scope>
    <source>
        <strain>ATCC BAA-679 / EGD-e</strain>
    </source>
</reference>
<dbReference type="EMBL" id="AL591983">
    <property type="protein sequence ID" value="CAD00592.1"/>
    <property type="molecule type" value="Genomic_DNA"/>
</dbReference>
<dbReference type="PIR" id="AB1389">
    <property type="entry name" value="AB1389"/>
</dbReference>
<dbReference type="RefSeq" id="NP_466037.1">
    <property type="nucleotide sequence ID" value="NC_003210.1"/>
</dbReference>
<dbReference type="RefSeq" id="WP_003722646.1">
    <property type="nucleotide sequence ID" value="NZ_CP149495.1"/>
</dbReference>
<dbReference type="SMR" id="Q8Y4D5"/>
<dbReference type="STRING" id="169963.gene:17595225"/>
<dbReference type="PaxDb" id="169963-lmo2514"/>
<dbReference type="EnsemblBacteria" id="CAD00592">
    <property type="protein sequence ID" value="CAD00592"/>
    <property type="gene ID" value="CAD00592"/>
</dbReference>
<dbReference type="GeneID" id="985904"/>
<dbReference type="KEGG" id="lmo:lmo2514"/>
<dbReference type="PATRIC" id="fig|169963.11.peg.2575"/>
<dbReference type="eggNOG" id="COG1307">
    <property type="taxonomic scope" value="Bacteria"/>
</dbReference>
<dbReference type="HOGENOM" id="CLU_048251_3_1_9"/>
<dbReference type="OrthoDB" id="9775494at2"/>
<dbReference type="PhylomeDB" id="Q8Y4D5"/>
<dbReference type="BioCyc" id="LMON169963:LMO2514-MONOMER"/>
<dbReference type="Proteomes" id="UP000000817">
    <property type="component" value="Chromosome"/>
</dbReference>
<dbReference type="GO" id="GO:0008289">
    <property type="term" value="F:lipid binding"/>
    <property type="evidence" value="ECO:0007669"/>
    <property type="project" value="UniProtKB-KW"/>
</dbReference>
<dbReference type="Gene3D" id="3.30.1180.10">
    <property type="match status" value="1"/>
</dbReference>
<dbReference type="Gene3D" id="3.40.50.10170">
    <property type="match status" value="1"/>
</dbReference>
<dbReference type="InterPro" id="IPR003797">
    <property type="entry name" value="DegV"/>
</dbReference>
<dbReference type="InterPro" id="IPR043168">
    <property type="entry name" value="DegV_C"/>
</dbReference>
<dbReference type="InterPro" id="IPR050270">
    <property type="entry name" value="DegV_domain_contain"/>
</dbReference>
<dbReference type="NCBIfam" id="TIGR00762">
    <property type="entry name" value="DegV"/>
    <property type="match status" value="1"/>
</dbReference>
<dbReference type="PANTHER" id="PTHR33434">
    <property type="entry name" value="DEGV DOMAIN-CONTAINING PROTEIN DR_1986-RELATED"/>
    <property type="match status" value="1"/>
</dbReference>
<dbReference type="PANTHER" id="PTHR33434:SF2">
    <property type="entry name" value="FATTY ACID-BINDING PROTEIN TM_1468"/>
    <property type="match status" value="1"/>
</dbReference>
<dbReference type="Pfam" id="PF02645">
    <property type="entry name" value="DegV"/>
    <property type="match status" value="1"/>
</dbReference>
<dbReference type="SUPFAM" id="SSF82549">
    <property type="entry name" value="DAK1/DegV-like"/>
    <property type="match status" value="1"/>
</dbReference>
<dbReference type="PROSITE" id="PS51482">
    <property type="entry name" value="DEGV"/>
    <property type="match status" value="1"/>
</dbReference>